<gene>
    <name evidence="1" type="primary">hemA</name>
    <name type="ordered locus">XOO3607</name>
</gene>
<proteinExistence type="inferred from homology"/>
<name>HEM1_XANOR</name>
<reference key="1">
    <citation type="journal article" date="2005" name="Nucleic Acids Res.">
        <title>The genome sequence of Xanthomonas oryzae pathovar oryzae KACC10331, the bacterial blight pathogen of rice.</title>
        <authorList>
            <person name="Lee B.-M."/>
            <person name="Park Y.-J."/>
            <person name="Park D.-S."/>
            <person name="Kang H.-W."/>
            <person name="Kim J.-G."/>
            <person name="Song E.-S."/>
            <person name="Park I.-C."/>
            <person name="Yoon U.-H."/>
            <person name="Hahn J.-H."/>
            <person name="Koo B.-S."/>
            <person name="Lee G.-B."/>
            <person name="Kim H."/>
            <person name="Park H.-S."/>
            <person name="Yoon K.-O."/>
            <person name="Kim J.-H."/>
            <person name="Jung C.-H."/>
            <person name="Koh N.-H."/>
            <person name="Seo J.-S."/>
            <person name="Go S.-J."/>
        </authorList>
    </citation>
    <scope>NUCLEOTIDE SEQUENCE [LARGE SCALE GENOMIC DNA]</scope>
    <source>
        <strain>KACC10331 / KXO85</strain>
    </source>
</reference>
<protein>
    <recommendedName>
        <fullName evidence="1">Glutamyl-tRNA reductase</fullName>
        <shortName evidence="1">GluTR</shortName>
        <ecNumber evidence="1">1.2.1.70</ecNumber>
    </recommendedName>
</protein>
<comment type="function">
    <text evidence="1">Catalyzes the NADPH-dependent reduction of glutamyl-tRNA(Glu) to glutamate 1-semialdehyde (GSA).</text>
</comment>
<comment type="catalytic activity">
    <reaction evidence="1">
        <text>(S)-4-amino-5-oxopentanoate + tRNA(Glu) + NADP(+) = L-glutamyl-tRNA(Glu) + NADPH + H(+)</text>
        <dbReference type="Rhea" id="RHEA:12344"/>
        <dbReference type="Rhea" id="RHEA-COMP:9663"/>
        <dbReference type="Rhea" id="RHEA-COMP:9680"/>
        <dbReference type="ChEBI" id="CHEBI:15378"/>
        <dbReference type="ChEBI" id="CHEBI:57501"/>
        <dbReference type="ChEBI" id="CHEBI:57783"/>
        <dbReference type="ChEBI" id="CHEBI:58349"/>
        <dbReference type="ChEBI" id="CHEBI:78442"/>
        <dbReference type="ChEBI" id="CHEBI:78520"/>
        <dbReference type="EC" id="1.2.1.70"/>
    </reaction>
</comment>
<comment type="pathway">
    <text evidence="1">Porphyrin-containing compound metabolism; protoporphyrin-IX biosynthesis; 5-aminolevulinate from L-glutamyl-tRNA(Glu): step 1/2.</text>
</comment>
<comment type="subunit">
    <text evidence="1">Homodimer.</text>
</comment>
<comment type="domain">
    <text evidence="1">Possesses an unusual extended V-shaped dimeric structure with each monomer consisting of three distinct domains arranged along a curved 'spinal' alpha-helix. The N-terminal catalytic domain specifically recognizes the glutamate moiety of the substrate. The second domain is the NADPH-binding domain, and the third C-terminal domain is responsible for dimerization.</text>
</comment>
<comment type="miscellaneous">
    <text evidence="1">During catalysis, the active site Cys acts as a nucleophile attacking the alpha-carbonyl group of tRNA-bound glutamate with the formation of a thioester intermediate between enzyme and glutamate, and the concomitant release of tRNA(Glu). The thioester intermediate is finally reduced by direct hydride transfer from NADPH, to form the product GSA.</text>
</comment>
<comment type="similarity">
    <text evidence="1">Belongs to the glutamyl-tRNA reductase family.</text>
</comment>
<accession>Q5GWR0</accession>
<feature type="chain" id="PRO_1000004726" description="Glutamyl-tRNA reductase">
    <location>
        <begin position="1"/>
        <end position="432"/>
    </location>
</feature>
<feature type="region of interest" description="Disordered" evidence="2">
    <location>
        <begin position="407"/>
        <end position="432"/>
    </location>
</feature>
<feature type="active site" description="Nucleophile" evidence="1">
    <location>
        <position position="50"/>
    </location>
</feature>
<feature type="binding site" evidence="1">
    <location>
        <begin position="49"/>
        <end position="52"/>
    </location>
    <ligand>
        <name>substrate</name>
    </ligand>
</feature>
<feature type="binding site" evidence="1">
    <location>
        <position position="101"/>
    </location>
    <ligand>
        <name>substrate</name>
    </ligand>
</feature>
<feature type="binding site" evidence="1">
    <location>
        <begin position="106"/>
        <end position="108"/>
    </location>
    <ligand>
        <name>substrate</name>
    </ligand>
</feature>
<feature type="binding site" evidence="1">
    <location>
        <position position="112"/>
    </location>
    <ligand>
        <name>substrate</name>
    </ligand>
</feature>
<feature type="binding site" evidence="1">
    <location>
        <begin position="181"/>
        <end position="186"/>
    </location>
    <ligand>
        <name>NADP(+)</name>
        <dbReference type="ChEBI" id="CHEBI:58349"/>
    </ligand>
</feature>
<feature type="site" description="Important for activity" evidence="1">
    <location>
        <position position="91"/>
    </location>
</feature>
<evidence type="ECO:0000255" key="1">
    <source>
        <dbReference type="HAMAP-Rule" id="MF_00087"/>
    </source>
</evidence>
<evidence type="ECO:0000256" key="2">
    <source>
        <dbReference type="SAM" id="MobiDB-lite"/>
    </source>
</evidence>
<keyword id="KW-0521">NADP</keyword>
<keyword id="KW-0560">Oxidoreductase</keyword>
<keyword id="KW-0627">Porphyrin biosynthesis</keyword>
<keyword id="KW-1185">Reference proteome</keyword>
<sequence length="432" mass="47411">MTLWVLGLNHQTAPVDLRERAAFAGDALPRALESLRALPQVSEAALLSTCNRTELYAMADEARSLVNWLETHAPGLSGYLYQHQEAEAVRHLFRVATGLDSMVLGEPQILGQVKDAWAVARAHGALGSGLDRLFQQTFSVAKRARTDTRVGANPVSVASTAVRLAQESFARLNESTVLLIGAGETIELAAKHLSEGRVRRLLIANRTLAHAQTLASQHGGYALPLTDLERHLAEADVVFSATAAREPLVTRVQVEQALRARKRKPMLLFDLAVPRDIEASVDELSDAYLYTVDDLERAVEDNRRGRREAADQAEAIIDLQVARYVETLQATTRQAPLKRLRAFGDSTRDELLAKARQQLHNGKPTDEVLEQLAHALTNRLLHPPTAALRDAALNNDLELTTAADRLFPEKPGYQHPPIATPIVRTDDADPAP</sequence>
<dbReference type="EC" id="1.2.1.70" evidence="1"/>
<dbReference type="EMBL" id="AE013598">
    <property type="protein sequence ID" value="AAW76861.1"/>
    <property type="molecule type" value="Genomic_DNA"/>
</dbReference>
<dbReference type="SMR" id="Q5GWR0"/>
<dbReference type="STRING" id="291331.XOO3607"/>
<dbReference type="KEGG" id="xoo:XOO3607"/>
<dbReference type="PATRIC" id="fig|291331.8.peg.3997"/>
<dbReference type="HOGENOM" id="CLU_035113_2_2_6"/>
<dbReference type="UniPathway" id="UPA00251">
    <property type="reaction ID" value="UER00316"/>
</dbReference>
<dbReference type="Proteomes" id="UP000006735">
    <property type="component" value="Chromosome"/>
</dbReference>
<dbReference type="GO" id="GO:0008883">
    <property type="term" value="F:glutamyl-tRNA reductase activity"/>
    <property type="evidence" value="ECO:0007669"/>
    <property type="project" value="UniProtKB-UniRule"/>
</dbReference>
<dbReference type="GO" id="GO:0050661">
    <property type="term" value="F:NADP binding"/>
    <property type="evidence" value="ECO:0007669"/>
    <property type="project" value="InterPro"/>
</dbReference>
<dbReference type="GO" id="GO:0019353">
    <property type="term" value="P:protoporphyrinogen IX biosynthetic process from glutamate"/>
    <property type="evidence" value="ECO:0007669"/>
    <property type="project" value="TreeGrafter"/>
</dbReference>
<dbReference type="CDD" id="cd05213">
    <property type="entry name" value="NAD_bind_Glutamyl_tRNA_reduct"/>
    <property type="match status" value="1"/>
</dbReference>
<dbReference type="FunFam" id="3.30.460.30:FF:000001">
    <property type="entry name" value="Glutamyl-tRNA reductase"/>
    <property type="match status" value="1"/>
</dbReference>
<dbReference type="FunFam" id="3.40.50.720:FF:000031">
    <property type="entry name" value="Glutamyl-tRNA reductase"/>
    <property type="match status" value="1"/>
</dbReference>
<dbReference type="Gene3D" id="3.30.460.30">
    <property type="entry name" value="Glutamyl-tRNA reductase, N-terminal domain"/>
    <property type="match status" value="1"/>
</dbReference>
<dbReference type="Gene3D" id="3.40.50.720">
    <property type="entry name" value="NAD(P)-binding Rossmann-like Domain"/>
    <property type="match status" value="1"/>
</dbReference>
<dbReference type="HAMAP" id="MF_00087">
    <property type="entry name" value="Glu_tRNA_reductase"/>
    <property type="match status" value="1"/>
</dbReference>
<dbReference type="InterPro" id="IPR000343">
    <property type="entry name" value="4pyrrol_synth_GluRdtase"/>
</dbReference>
<dbReference type="InterPro" id="IPR015896">
    <property type="entry name" value="4pyrrol_synth_GluRdtase_dimer"/>
</dbReference>
<dbReference type="InterPro" id="IPR015895">
    <property type="entry name" value="4pyrrol_synth_GluRdtase_N"/>
</dbReference>
<dbReference type="InterPro" id="IPR018214">
    <property type="entry name" value="GluRdtase_CS"/>
</dbReference>
<dbReference type="InterPro" id="IPR036453">
    <property type="entry name" value="GluRdtase_dimer_dom_sf"/>
</dbReference>
<dbReference type="InterPro" id="IPR036343">
    <property type="entry name" value="GluRdtase_N_sf"/>
</dbReference>
<dbReference type="InterPro" id="IPR036291">
    <property type="entry name" value="NAD(P)-bd_dom_sf"/>
</dbReference>
<dbReference type="InterPro" id="IPR006151">
    <property type="entry name" value="Shikm_DH/Glu-tRNA_Rdtase"/>
</dbReference>
<dbReference type="NCBIfam" id="TIGR01035">
    <property type="entry name" value="hemA"/>
    <property type="match status" value="1"/>
</dbReference>
<dbReference type="PANTHER" id="PTHR43013">
    <property type="entry name" value="GLUTAMYL-TRNA REDUCTASE"/>
    <property type="match status" value="1"/>
</dbReference>
<dbReference type="PANTHER" id="PTHR43013:SF1">
    <property type="entry name" value="GLUTAMYL-TRNA REDUCTASE"/>
    <property type="match status" value="1"/>
</dbReference>
<dbReference type="Pfam" id="PF00745">
    <property type="entry name" value="GlutR_dimer"/>
    <property type="match status" value="1"/>
</dbReference>
<dbReference type="Pfam" id="PF05201">
    <property type="entry name" value="GlutR_N"/>
    <property type="match status" value="1"/>
</dbReference>
<dbReference type="Pfam" id="PF01488">
    <property type="entry name" value="Shikimate_DH"/>
    <property type="match status" value="1"/>
</dbReference>
<dbReference type="PIRSF" id="PIRSF000445">
    <property type="entry name" value="4pyrrol_synth_GluRdtase"/>
    <property type="match status" value="1"/>
</dbReference>
<dbReference type="SUPFAM" id="SSF69742">
    <property type="entry name" value="Glutamyl tRNA-reductase catalytic, N-terminal domain"/>
    <property type="match status" value="1"/>
</dbReference>
<dbReference type="SUPFAM" id="SSF69075">
    <property type="entry name" value="Glutamyl tRNA-reductase dimerization domain"/>
    <property type="match status" value="1"/>
</dbReference>
<dbReference type="SUPFAM" id="SSF51735">
    <property type="entry name" value="NAD(P)-binding Rossmann-fold domains"/>
    <property type="match status" value="1"/>
</dbReference>
<dbReference type="PROSITE" id="PS00747">
    <property type="entry name" value="GLUTR"/>
    <property type="match status" value="1"/>
</dbReference>
<organism>
    <name type="scientific">Xanthomonas oryzae pv. oryzae (strain KACC10331 / KXO85)</name>
    <dbReference type="NCBI Taxonomy" id="291331"/>
    <lineage>
        <taxon>Bacteria</taxon>
        <taxon>Pseudomonadati</taxon>
        <taxon>Pseudomonadota</taxon>
        <taxon>Gammaproteobacteria</taxon>
        <taxon>Lysobacterales</taxon>
        <taxon>Lysobacteraceae</taxon>
        <taxon>Xanthomonas</taxon>
    </lineage>
</organism>